<name>TATA_CAUVC</name>
<feature type="chain" id="PRO_1000058956" description="Sec-independent protein translocase protein TatA">
    <location>
        <begin position="1"/>
        <end position="74"/>
    </location>
</feature>
<feature type="transmembrane region" description="Helical" evidence="1">
    <location>
        <begin position="1"/>
        <end position="21"/>
    </location>
</feature>
<feature type="region of interest" description="Disordered" evidence="2">
    <location>
        <begin position="51"/>
        <end position="74"/>
    </location>
</feature>
<feature type="compositionally biased region" description="Basic and acidic residues" evidence="2">
    <location>
        <begin position="64"/>
        <end position="74"/>
    </location>
</feature>
<accession>Q9A6T0</accession>
<sequence>MGSMSWIHWVIVLGIVALLFGGRGKLSSIMGDAAKGIKAFKDGLKDESSSEVADNKAKSALPRTEAEAEELRKS</sequence>
<organism>
    <name type="scientific">Caulobacter vibrioides (strain ATCC 19089 / CIP 103742 / CB 15)</name>
    <name type="common">Caulobacter crescentus</name>
    <dbReference type="NCBI Taxonomy" id="190650"/>
    <lineage>
        <taxon>Bacteria</taxon>
        <taxon>Pseudomonadati</taxon>
        <taxon>Pseudomonadota</taxon>
        <taxon>Alphaproteobacteria</taxon>
        <taxon>Caulobacterales</taxon>
        <taxon>Caulobacteraceae</taxon>
        <taxon>Caulobacter</taxon>
    </lineage>
</organism>
<keyword id="KW-0997">Cell inner membrane</keyword>
<keyword id="KW-1003">Cell membrane</keyword>
<keyword id="KW-0472">Membrane</keyword>
<keyword id="KW-0653">Protein transport</keyword>
<keyword id="KW-1185">Reference proteome</keyword>
<keyword id="KW-0811">Translocation</keyword>
<keyword id="KW-0812">Transmembrane</keyword>
<keyword id="KW-1133">Transmembrane helix</keyword>
<keyword id="KW-0813">Transport</keyword>
<comment type="function">
    <text evidence="1">Part of the twin-arginine translocation (Tat) system that transports large folded proteins containing a characteristic twin-arginine motif in their signal peptide across membranes. TatA could form the protein-conducting channel of the Tat system.</text>
</comment>
<comment type="subunit">
    <text evidence="1">The Tat system comprises two distinct complexes: a TatABC complex, containing multiple copies of TatA, TatB and TatC subunits, and a separate TatA complex, containing only TatA subunits. Substrates initially bind to the TatABC complex, which probably triggers association of the separate TatA complex to form the active translocon.</text>
</comment>
<comment type="subcellular location">
    <subcellularLocation>
        <location evidence="1">Cell inner membrane</location>
        <topology evidence="1">Single-pass membrane protein</topology>
    </subcellularLocation>
</comment>
<comment type="similarity">
    <text evidence="1">Belongs to the TatA/E family.</text>
</comment>
<evidence type="ECO:0000255" key="1">
    <source>
        <dbReference type="HAMAP-Rule" id="MF_00236"/>
    </source>
</evidence>
<evidence type="ECO:0000256" key="2">
    <source>
        <dbReference type="SAM" id="MobiDB-lite"/>
    </source>
</evidence>
<protein>
    <recommendedName>
        <fullName evidence="1">Sec-independent protein translocase protein TatA</fullName>
    </recommendedName>
</protein>
<dbReference type="EMBL" id="AE005673">
    <property type="protein sequence ID" value="AAK23978.1"/>
    <property type="molecule type" value="Genomic_DNA"/>
</dbReference>
<dbReference type="PIR" id="F87497">
    <property type="entry name" value="F87497"/>
</dbReference>
<dbReference type="RefSeq" id="NP_420810.1">
    <property type="nucleotide sequence ID" value="NC_002696.2"/>
</dbReference>
<dbReference type="RefSeq" id="WP_010919869.1">
    <property type="nucleotide sequence ID" value="NC_002696.2"/>
</dbReference>
<dbReference type="SMR" id="Q9A6T0"/>
<dbReference type="STRING" id="190650.CC_2003"/>
<dbReference type="EnsemblBacteria" id="AAK23978">
    <property type="protein sequence ID" value="AAK23978"/>
    <property type="gene ID" value="CC_2003"/>
</dbReference>
<dbReference type="KEGG" id="ccr:CC_2003"/>
<dbReference type="PATRIC" id="fig|190650.5.peg.2022"/>
<dbReference type="eggNOG" id="COG1826">
    <property type="taxonomic scope" value="Bacteria"/>
</dbReference>
<dbReference type="HOGENOM" id="CLU_086034_5_0_5"/>
<dbReference type="BioCyc" id="CAULO:CC2003-MONOMER"/>
<dbReference type="Proteomes" id="UP000001816">
    <property type="component" value="Chromosome"/>
</dbReference>
<dbReference type="GO" id="GO:0033281">
    <property type="term" value="C:TAT protein transport complex"/>
    <property type="evidence" value="ECO:0007669"/>
    <property type="project" value="UniProtKB-UniRule"/>
</dbReference>
<dbReference type="GO" id="GO:0008320">
    <property type="term" value="F:protein transmembrane transporter activity"/>
    <property type="evidence" value="ECO:0007669"/>
    <property type="project" value="UniProtKB-UniRule"/>
</dbReference>
<dbReference type="GO" id="GO:0043953">
    <property type="term" value="P:protein transport by the Tat complex"/>
    <property type="evidence" value="ECO:0007669"/>
    <property type="project" value="UniProtKB-UniRule"/>
</dbReference>
<dbReference type="Gene3D" id="1.20.5.3310">
    <property type="match status" value="1"/>
</dbReference>
<dbReference type="HAMAP" id="MF_00236">
    <property type="entry name" value="TatA_E"/>
    <property type="match status" value="1"/>
</dbReference>
<dbReference type="InterPro" id="IPR003369">
    <property type="entry name" value="TatA/B/E"/>
</dbReference>
<dbReference type="InterPro" id="IPR006312">
    <property type="entry name" value="TatA/E"/>
</dbReference>
<dbReference type="NCBIfam" id="NF001940">
    <property type="entry name" value="PRK00720.1"/>
    <property type="match status" value="1"/>
</dbReference>
<dbReference type="NCBIfam" id="TIGR01411">
    <property type="entry name" value="tatAE"/>
    <property type="match status" value="1"/>
</dbReference>
<dbReference type="PANTHER" id="PTHR42982">
    <property type="entry name" value="SEC-INDEPENDENT PROTEIN TRANSLOCASE PROTEIN TATA"/>
    <property type="match status" value="1"/>
</dbReference>
<dbReference type="PANTHER" id="PTHR42982:SF1">
    <property type="entry name" value="SEC-INDEPENDENT PROTEIN TRANSLOCASE PROTEIN TATA"/>
    <property type="match status" value="1"/>
</dbReference>
<dbReference type="Pfam" id="PF02416">
    <property type="entry name" value="TatA_B_E"/>
    <property type="match status" value="1"/>
</dbReference>
<reference key="1">
    <citation type="journal article" date="2001" name="Proc. Natl. Acad. Sci. U.S.A.">
        <title>Complete genome sequence of Caulobacter crescentus.</title>
        <authorList>
            <person name="Nierman W.C."/>
            <person name="Feldblyum T.V."/>
            <person name="Laub M.T."/>
            <person name="Paulsen I.T."/>
            <person name="Nelson K.E."/>
            <person name="Eisen J.A."/>
            <person name="Heidelberg J.F."/>
            <person name="Alley M.R.K."/>
            <person name="Ohta N."/>
            <person name="Maddock J.R."/>
            <person name="Potocka I."/>
            <person name="Nelson W.C."/>
            <person name="Newton A."/>
            <person name="Stephens C."/>
            <person name="Phadke N.D."/>
            <person name="Ely B."/>
            <person name="DeBoy R.T."/>
            <person name="Dodson R.J."/>
            <person name="Durkin A.S."/>
            <person name="Gwinn M.L."/>
            <person name="Haft D.H."/>
            <person name="Kolonay J.F."/>
            <person name="Smit J."/>
            <person name="Craven M.B."/>
            <person name="Khouri H.M."/>
            <person name="Shetty J."/>
            <person name="Berry K.J."/>
            <person name="Utterback T.R."/>
            <person name="Tran K."/>
            <person name="Wolf A.M."/>
            <person name="Vamathevan J.J."/>
            <person name="Ermolaeva M.D."/>
            <person name="White O."/>
            <person name="Salzberg S.L."/>
            <person name="Venter J.C."/>
            <person name="Shapiro L."/>
            <person name="Fraser C.M."/>
        </authorList>
    </citation>
    <scope>NUCLEOTIDE SEQUENCE [LARGE SCALE GENOMIC DNA]</scope>
    <source>
        <strain>ATCC 19089 / CIP 103742 / CB 15</strain>
    </source>
</reference>
<proteinExistence type="inferred from homology"/>
<gene>
    <name evidence="1" type="primary">tatA</name>
    <name type="ordered locus">CC_2003</name>
</gene>